<organism>
    <name type="scientific">Arabidopsis thaliana</name>
    <name type="common">Mouse-ear cress</name>
    <dbReference type="NCBI Taxonomy" id="3702"/>
    <lineage>
        <taxon>Eukaryota</taxon>
        <taxon>Viridiplantae</taxon>
        <taxon>Streptophyta</taxon>
        <taxon>Embryophyta</taxon>
        <taxon>Tracheophyta</taxon>
        <taxon>Spermatophyta</taxon>
        <taxon>Magnoliopsida</taxon>
        <taxon>eudicotyledons</taxon>
        <taxon>Gunneridae</taxon>
        <taxon>Pentapetalae</taxon>
        <taxon>rosids</taxon>
        <taxon>malvids</taxon>
        <taxon>Brassicales</taxon>
        <taxon>Brassicaceae</taxon>
        <taxon>Camelineae</taxon>
        <taxon>Arabidopsis</taxon>
    </lineage>
</organism>
<reference key="1">
    <citation type="journal article" date="2004" name="Nature">
        <title>Regulation of ethylene gas biosynthesis by the Arabidopsis ETO1 protein.</title>
        <authorList>
            <person name="Wang K.L.-C."/>
            <person name="Yoshida H."/>
            <person name="Lurin C."/>
            <person name="Ecker J.R."/>
        </authorList>
    </citation>
    <scope>NUCLEOTIDE SEQUENCE [MRNA]</scope>
    <scope>INTERACTION WITH ACS5</scope>
</reference>
<reference key="2">
    <citation type="journal article" date="1999" name="Nature">
        <title>Sequence and analysis of chromosome 4 of the plant Arabidopsis thaliana.</title>
        <authorList>
            <person name="Mayer K.F.X."/>
            <person name="Schueller C."/>
            <person name="Wambutt R."/>
            <person name="Murphy G."/>
            <person name="Volckaert G."/>
            <person name="Pohl T."/>
            <person name="Duesterhoeft A."/>
            <person name="Stiekema W."/>
            <person name="Entian K.-D."/>
            <person name="Terryn N."/>
            <person name="Harris B."/>
            <person name="Ansorge W."/>
            <person name="Brandt P."/>
            <person name="Grivell L.A."/>
            <person name="Rieger M."/>
            <person name="Weichselgartner M."/>
            <person name="de Simone V."/>
            <person name="Obermaier B."/>
            <person name="Mache R."/>
            <person name="Mueller M."/>
            <person name="Kreis M."/>
            <person name="Delseny M."/>
            <person name="Puigdomenech P."/>
            <person name="Watson M."/>
            <person name="Schmidtheini T."/>
            <person name="Reichert B."/>
            <person name="Portetelle D."/>
            <person name="Perez-Alonso M."/>
            <person name="Boutry M."/>
            <person name="Bancroft I."/>
            <person name="Vos P."/>
            <person name="Hoheisel J."/>
            <person name="Zimmermann W."/>
            <person name="Wedler H."/>
            <person name="Ridley P."/>
            <person name="Langham S.-A."/>
            <person name="McCullagh B."/>
            <person name="Bilham L."/>
            <person name="Robben J."/>
            <person name="van der Schueren J."/>
            <person name="Grymonprez B."/>
            <person name="Chuang Y.-J."/>
            <person name="Vandenbussche F."/>
            <person name="Braeken M."/>
            <person name="Weltjens I."/>
            <person name="Voet M."/>
            <person name="Bastiaens I."/>
            <person name="Aert R."/>
            <person name="Defoor E."/>
            <person name="Weitzenegger T."/>
            <person name="Bothe G."/>
            <person name="Ramsperger U."/>
            <person name="Hilbert H."/>
            <person name="Braun M."/>
            <person name="Holzer E."/>
            <person name="Brandt A."/>
            <person name="Peters S."/>
            <person name="van Staveren M."/>
            <person name="Dirkse W."/>
            <person name="Mooijman P."/>
            <person name="Klein Lankhorst R."/>
            <person name="Rose M."/>
            <person name="Hauf J."/>
            <person name="Koetter P."/>
            <person name="Berneiser S."/>
            <person name="Hempel S."/>
            <person name="Feldpausch M."/>
            <person name="Lamberth S."/>
            <person name="Van den Daele H."/>
            <person name="De Keyser A."/>
            <person name="Buysshaert C."/>
            <person name="Gielen J."/>
            <person name="Villarroel R."/>
            <person name="De Clercq R."/>
            <person name="van Montagu M."/>
            <person name="Rogers J."/>
            <person name="Cronin A."/>
            <person name="Quail M.A."/>
            <person name="Bray-Allen S."/>
            <person name="Clark L."/>
            <person name="Doggett J."/>
            <person name="Hall S."/>
            <person name="Kay M."/>
            <person name="Lennard N."/>
            <person name="McLay K."/>
            <person name="Mayes R."/>
            <person name="Pettett A."/>
            <person name="Rajandream M.A."/>
            <person name="Lyne M."/>
            <person name="Benes V."/>
            <person name="Rechmann S."/>
            <person name="Borkova D."/>
            <person name="Bloecker H."/>
            <person name="Scharfe M."/>
            <person name="Grimm M."/>
            <person name="Loehnert T.-H."/>
            <person name="Dose S."/>
            <person name="de Haan M."/>
            <person name="Maarse A.C."/>
            <person name="Schaefer M."/>
            <person name="Mueller-Auer S."/>
            <person name="Gabel C."/>
            <person name="Fuchs M."/>
            <person name="Fartmann B."/>
            <person name="Granderath K."/>
            <person name="Dauner D."/>
            <person name="Herzl A."/>
            <person name="Neumann S."/>
            <person name="Argiriou A."/>
            <person name="Vitale D."/>
            <person name="Liguori R."/>
            <person name="Piravandi E."/>
            <person name="Massenet O."/>
            <person name="Quigley F."/>
            <person name="Clabauld G."/>
            <person name="Muendlein A."/>
            <person name="Felber R."/>
            <person name="Schnabl S."/>
            <person name="Hiller R."/>
            <person name="Schmidt W."/>
            <person name="Lecharny A."/>
            <person name="Aubourg S."/>
            <person name="Chefdor F."/>
            <person name="Cooke R."/>
            <person name="Berger C."/>
            <person name="Monfort A."/>
            <person name="Casacuberta E."/>
            <person name="Gibbons T."/>
            <person name="Weber N."/>
            <person name="Vandenbol M."/>
            <person name="Bargues M."/>
            <person name="Terol J."/>
            <person name="Torres A."/>
            <person name="Perez-Perez A."/>
            <person name="Purnelle B."/>
            <person name="Bent E."/>
            <person name="Johnson S."/>
            <person name="Tacon D."/>
            <person name="Jesse T."/>
            <person name="Heijnen L."/>
            <person name="Schwarz S."/>
            <person name="Scholler P."/>
            <person name="Heber S."/>
            <person name="Francs P."/>
            <person name="Bielke C."/>
            <person name="Frishman D."/>
            <person name="Haase D."/>
            <person name="Lemcke K."/>
            <person name="Mewes H.-W."/>
            <person name="Stocker S."/>
            <person name="Zaccaria P."/>
            <person name="Bevan M."/>
            <person name="Wilson R.K."/>
            <person name="de la Bastide M."/>
            <person name="Habermann K."/>
            <person name="Parnell L."/>
            <person name="Dedhia N."/>
            <person name="Gnoj L."/>
            <person name="Schutz K."/>
            <person name="Huang E."/>
            <person name="Spiegel L."/>
            <person name="Sekhon M."/>
            <person name="Murray J."/>
            <person name="Sheet P."/>
            <person name="Cordes M."/>
            <person name="Abu-Threideh J."/>
            <person name="Stoneking T."/>
            <person name="Kalicki J."/>
            <person name="Graves T."/>
            <person name="Harmon G."/>
            <person name="Edwards J."/>
            <person name="Latreille P."/>
            <person name="Courtney L."/>
            <person name="Cloud J."/>
            <person name="Abbott A."/>
            <person name="Scott K."/>
            <person name="Johnson D."/>
            <person name="Minx P."/>
            <person name="Bentley D."/>
            <person name="Fulton B."/>
            <person name="Miller N."/>
            <person name="Greco T."/>
            <person name="Kemp K."/>
            <person name="Kramer J."/>
            <person name="Fulton L."/>
            <person name="Mardis E."/>
            <person name="Dante M."/>
            <person name="Pepin K."/>
            <person name="Hillier L.W."/>
            <person name="Nelson J."/>
            <person name="Spieth J."/>
            <person name="Ryan E."/>
            <person name="Andrews S."/>
            <person name="Geisel C."/>
            <person name="Layman D."/>
            <person name="Du H."/>
            <person name="Ali J."/>
            <person name="Berghoff A."/>
            <person name="Jones K."/>
            <person name="Drone K."/>
            <person name="Cotton M."/>
            <person name="Joshu C."/>
            <person name="Antonoiu B."/>
            <person name="Zidanic M."/>
            <person name="Strong C."/>
            <person name="Sun H."/>
            <person name="Lamar B."/>
            <person name="Yordan C."/>
            <person name="Ma P."/>
            <person name="Zhong J."/>
            <person name="Preston R."/>
            <person name="Vil D."/>
            <person name="Shekher M."/>
            <person name="Matero A."/>
            <person name="Shah R."/>
            <person name="Swaby I.K."/>
            <person name="O'Shaughnessy A."/>
            <person name="Rodriguez M."/>
            <person name="Hoffman J."/>
            <person name="Till S."/>
            <person name="Granat S."/>
            <person name="Shohdy N."/>
            <person name="Hasegawa A."/>
            <person name="Hameed A."/>
            <person name="Lodhi M."/>
            <person name="Johnson A."/>
            <person name="Chen E."/>
            <person name="Marra M.A."/>
            <person name="Martienssen R."/>
            <person name="McCombie W.R."/>
        </authorList>
    </citation>
    <scope>NUCLEOTIDE SEQUENCE [LARGE SCALE GENOMIC DNA]</scope>
    <source>
        <strain>cv. Columbia</strain>
    </source>
</reference>
<reference key="3">
    <citation type="journal article" date="2017" name="Plant J.">
        <title>Araport11: a complete reannotation of the Arabidopsis thaliana reference genome.</title>
        <authorList>
            <person name="Cheng C.Y."/>
            <person name="Krishnakumar V."/>
            <person name="Chan A.P."/>
            <person name="Thibaud-Nissen F."/>
            <person name="Schobel S."/>
            <person name="Town C.D."/>
        </authorList>
    </citation>
    <scope>GENOME REANNOTATION</scope>
    <source>
        <strain>cv. Columbia</strain>
    </source>
</reference>
<reference key="4">
    <citation type="submission" date="2006-07" db="EMBL/GenBank/DDBJ databases">
        <title>Large-scale analysis of RIKEN Arabidopsis full-length (RAFL) cDNAs.</title>
        <authorList>
            <person name="Totoki Y."/>
            <person name="Seki M."/>
            <person name="Ishida J."/>
            <person name="Nakajima M."/>
            <person name="Enju A."/>
            <person name="Kamiya A."/>
            <person name="Narusaka M."/>
            <person name="Shin-i T."/>
            <person name="Nakagawa M."/>
            <person name="Sakamoto N."/>
            <person name="Oishi K."/>
            <person name="Kohara Y."/>
            <person name="Kobayashi M."/>
            <person name="Toyoda A."/>
            <person name="Sakaki Y."/>
            <person name="Sakurai T."/>
            <person name="Iida K."/>
            <person name="Akiyama K."/>
            <person name="Satou M."/>
            <person name="Toyoda T."/>
            <person name="Konagaya A."/>
            <person name="Carninci P."/>
            <person name="Kawai J."/>
            <person name="Hayashizaki Y."/>
            <person name="Shinozaki K."/>
        </authorList>
    </citation>
    <scope>NUCLEOTIDE SEQUENCE [LARGE SCALE MRNA]</scope>
    <source>
        <strain>cv. Columbia</strain>
    </source>
</reference>
<reference key="5">
    <citation type="journal article" date="2005" name="J. Biol. Chem.">
        <title>Cullins 3a and 3b assemble with members of the broad complex/tramtrack/bric-a-brac (BTB) protein family to form essential ubiquitin-protein ligases (E3s) in Arabidopsis.</title>
        <authorList>
            <person name="Gingerich D.J."/>
            <person name="Gagne J.M."/>
            <person name="Salter D.W."/>
            <person name="Hellmann H."/>
            <person name="Estelle M."/>
            <person name="Ma L."/>
            <person name="Vierstra R.D."/>
        </authorList>
    </citation>
    <scope>DOMAIN BTB</scope>
</reference>
<reference key="6">
    <citation type="journal article" date="2009" name="Plant J.">
        <title>The BTB ubiquitin ligases ETO1, EOL1 and EOL2 act collectively to regulate ethylene biosynthesis in Arabidopsis by controlling type-2 ACC synthase levels.</title>
        <authorList>
            <person name="Christians M.J."/>
            <person name="Gingerich D.J."/>
            <person name="Hansen M."/>
            <person name="Binder B.M."/>
            <person name="Kieber J.J."/>
            <person name="Vierstra R.D."/>
        </authorList>
    </citation>
    <scope>FUNCTION</scope>
    <scope>INTERACTION WITH ACS4; ACS5 AND ACS9</scope>
    <scope>TISSUE SPECIFICITY</scope>
</reference>
<feature type="chain" id="PRO_0000106290" description="ETO1-like protein 1">
    <location>
        <begin position="1"/>
        <end position="888"/>
    </location>
</feature>
<feature type="domain" description="BTB">
    <location>
        <begin position="180"/>
        <end position="280"/>
    </location>
</feature>
<feature type="repeat" description="TPR 1">
    <location>
        <begin position="381"/>
        <end position="414"/>
    </location>
</feature>
<feature type="repeat" description="TPR 2">
    <location>
        <begin position="441"/>
        <end position="477"/>
    </location>
</feature>
<feature type="repeat" description="TPR 3">
    <location>
        <begin position="511"/>
        <end position="544"/>
    </location>
</feature>
<feature type="repeat" description="TPR 4">
    <location>
        <begin position="637"/>
        <end position="670"/>
    </location>
</feature>
<feature type="repeat" description="TPR 5">
    <location>
        <begin position="711"/>
        <end position="744"/>
    </location>
</feature>
<feature type="repeat" description="TPR 6">
    <location>
        <begin position="807"/>
        <end position="840"/>
    </location>
</feature>
<feature type="repeat" description="TPR 7">
    <location>
        <begin position="842"/>
        <end position="873"/>
    </location>
</feature>
<feature type="coiled-coil region" evidence="2">
    <location>
        <begin position="755"/>
        <end position="793"/>
    </location>
</feature>
<accession>Q9ZQX6</accession>
<accession>Q0WP84</accession>
<protein>
    <recommendedName>
        <fullName>ETO1-like protein 1</fullName>
    </recommendedName>
    <alternativeName>
        <fullName>Ethylene overproducer 1-like protein 1</fullName>
    </alternativeName>
</protein>
<sequence>MRTFYPSDSCKESQLDSLNPQSWLQVERGKLSSSASSSAPLCRESFIKVPEPQILPHYKPLDYVEVLAQIHEELDTCPLQERSILYLLQYQVFRGLGETKLRRRSLQSAWQEATTVHEKVVFGSWLRYEKQGEEVITDLLSSCGKYSEEFVPLDIASYFPATTASSPEAASVKTNRSVSKNVVFKIGEEKIACQRRKIASLSAPFHAMLYGNFTESLLDEIDMSENHVSSSAMRVVRDFSVVGVLIGVSKNLLLEVLVFANKFCCERLKDACDRELASLISSMECAIELMDFALEENSPILASSCLQVFLYEMPDSLNDERVVEVLTRVNRSQVSTMAGKAPFSLYSCLSEVSMCIDPRSDRTLGFLEKLVDFAENDRQQVLGFHRLGCMRLLRKEYREAEEAFETAFNLGHVYSATGLARLGYIQGHRLWAYEKLSSVISSVSPPLGWMYQERSFYCEGDKKLEDLEKATELDPTLTYPYMYRAVTRMSKQNAKAALEEINRILGFKLALECLEIRFCLYLGMDDYEAALRDIQAALTLCPDYRMFDGKVAGRQLQTLVYEHVENWTTADCWMQLYEKWSNVDDIGSLSVIYQMLESDACKGVLYFRQSLLLLRLNCPEAAMRSLQLAREHASSDHERLVYEGWILYDTGHCEEGLQKAKESIGIKRSFEAYFLQAYALAESSLDPSSSSTVVSLLEDALKCPSDRLRKGQALNNLGSVYVDCEKLDLAADCYINALKVRHTRAHQGLARVHFLRNDKAAAYEEMTRLIEKAQNNASAYEKRSEYCDRELAKSDLEMVTRLDPLRVYPYRYRAAVLMDSRKEREAITELSRAIAFKADLHLLHLRAAFHEHIGDVTSALRDCRAALSVDPNHQEMLELHSRVNSHEP</sequence>
<dbReference type="EMBL" id="AY572792">
    <property type="protein sequence ID" value="AAT01657.1"/>
    <property type="molecule type" value="mRNA"/>
</dbReference>
<dbReference type="EMBL" id="AC002330">
    <property type="protein sequence ID" value="AAC78270.1"/>
    <property type="molecule type" value="Genomic_DNA"/>
</dbReference>
<dbReference type="EMBL" id="AL161495">
    <property type="protein sequence ID" value="CAB77753.1"/>
    <property type="molecule type" value="Genomic_DNA"/>
</dbReference>
<dbReference type="EMBL" id="CP002687">
    <property type="protein sequence ID" value="AEE82213.1"/>
    <property type="molecule type" value="Genomic_DNA"/>
</dbReference>
<dbReference type="EMBL" id="AK229195">
    <property type="protein sequence ID" value="BAF01065.1"/>
    <property type="molecule type" value="mRNA"/>
</dbReference>
<dbReference type="PIR" id="T01081">
    <property type="entry name" value="T01081"/>
</dbReference>
<dbReference type="RefSeq" id="NP_192177.1">
    <property type="nucleotide sequence ID" value="NM_116502.4"/>
</dbReference>
<dbReference type="SMR" id="Q9ZQX6"/>
<dbReference type="BioGRID" id="13494">
    <property type="interactions" value="2"/>
</dbReference>
<dbReference type="FunCoup" id="Q9ZQX6">
    <property type="interactions" value="2922"/>
</dbReference>
<dbReference type="IntAct" id="Q9ZQX6">
    <property type="interactions" value="2"/>
</dbReference>
<dbReference type="STRING" id="3702.Q9ZQX6"/>
<dbReference type="PaxDb" id="3702-AT4G02680.1"/>
<dbReference type="ProteomicsDB" id="222356"/>
<dbReference type="EnsemblPlants" id="AT4G02680.1">
    <property type="protein sequence ID" value="AT4G02680.1"/>
    <property type="gene ID" value="AT4G02680"/>
</dbReference>
<dbReference type="GeneID" id="828205"/>
<dbReference type="Gramene" id="AT4G02680.1">
    <property type="protein sequence ID" value="AT4G02680.1"/>
    <property type="gene ID" value="AT4G02680"/>
</dbReference>
<dbReference type="KEGG" id="ath:AT4G02680"/>
<dbReference type="Araport" id="AT4G02680"/>
<dbReference type="TAIR" id="AT4G02680">
    <property type="gene designation" value="EOL1"/>
</dbReference>
<dbReference type="eggNOG" id="ENOG502QPQB">
    <property type="taxonomic scope" value="Eukaryota"/>
</dbReference>
<dbReference type="HOGENOM" id="CLU_015650_0_0_1"/>
<dbReference type="InParanoid" id="Q9ZQX6"/>
<dbReference type="OMA" id="EILMFAN"/>
<dbReference type="OrthoDB" id="1893081at2759"/>
<dbReference type="PhylomeDB" id="Q9ZQX6"/>
<dbReference type="UniPathway" id="UPA00143"/>
<dbReference type="PRO" id="PR:Q9ZQX6"/>
<dbReference type="Proteomes" id="UP000006548">
    <property type="component" value="Chromosome 4"/>
</dbReference>
<dbReference type="ExpressionAtlas" id="Q9ZQX6">
    <property type="expression patterns" value="baseline and differential"/>
</dbReference>
<dbReference type="GO" id="GO:0005829">
    <property type="term" value="C:cytosol"/>
    <property type="evidence" value="ECO:0007005"/>
    <property type="project" value="TAIR"/>
</dbReference>
<dbReference type="GO" id="GO:0009873">
    <property type="term" value="P:ethylene-activated signaling pathway"/>
    <property type="evidence" value="ECO:0007669"/>
    <property type="project" value="UniProtKB-KW"/>
</dbReference>
<dbReference type="GO" id="GO:0010105">
    <property type="term" value="P:negative regulation of ethylene-activated signaling pathway"/>
    <property type="evidence" value="ECO:0007669"/>
    <property type="project" value="InterPro"/>
</dbReference>
<dbReference type="GO" id="GO:0016567">
    <property type="term" value="P:protein ubiquitination"/>
    <property type="evidence" value="ECO:0007669"/>
    <property type="project" value="UniProtKB-UniPathway"/>
</dbReference>
<dbReference type="GO" id="GO:0010364">
    <property type="term" value="P:regulation of ethylene biosynthetic process"/>
    <property type="evidence" value="ECO:0000314"/>
    <property type="project" value="TAIR"/>
</dbReference>
<dbReference type="CDD" id="cd18190">
    <property type="entry name" value="BTB_POZ_ETO1-like"/>
    <property type="match status" value="1"/>
</dbReference>
<dbReference type="FunFam" id="1.25.40.10:FF:000867">
    <property type="entry name" value="ETO1-like protein 1"/>
    <property type="match status" value="1"/>
</dbReference>
<dbReference type="Gene3D" id="3.30.710.10">
    <property type="entry name" value="Potassium Channel Kv1.1, Chain A"/>
    <property type="match status" value="1"/>
</dbReference>
<dbReference type="Gene3D" id="1.25.40.10">
    <property type="entry name" value="Tetratricopeptide repeat domain"/>
    <property type="match status" value="3"/>
</dbReference>
<dbReference type="InterPro" id="IPR044631">
    <property type="entry name" value="ETO1-like"/>
</dbReference>
<dbReference type="InterPro" id="IPR011333">
    <property type="entry name" value="SKP1/BTB/POZ_sf"/>
</dbReference>
<dbReference type="InterPro" id="IPR011990">
    <property type="entry name" value="TPR-like_helical_dom_sf"/>
</dbReference>
<dbReference type="InterPro" id="IPR019734">
    <property type="entry name" value="TPR_rpt"/>
</dbReference>
<dbReference type="PANTHER" id="PTHR44203:SF2">
    <property type="entry name" value="ETO1-LIKE PROTEIN 1"/>
    <property type="match status" value="1"/>
</dbReference>
<dbReference type="PANTHER" id="PTHR44203">
    <property type="entry name" value="ETO1-RELATED"/>
    <property type="match status" value="1"/>
</dbReference>
<dbReference type="SMART" id="SM00028">
    <property type="entry name" value="TPR"/>
    <property type="match status" value="5"/>
</dbReference>
<dbReference type="SUPFAM" id="SSF54695">
    <property type="entry name" value="POZ domain"/>
    <property type="match status" value="1"/>
</dbReference>
<dbReference type="SUPFAM" id="SSF48452">
    <property type="entry name" value="TPR-like"/>
    <property type="match status" value="3"/>
</dbReference>
<proteinExistence type="evidence at protein level"/>
<evidence type="ECO:0000250" key="1"/>
<evidence type="ECO:0000255" key="2"/>
<evidence type="ECO:0000269" key="3">
    <source>
    </source>
</evidence>
<evidence type="ECO:0000269" key="4">
    <source>
    </source>
</evidence>
<evidence type="ECO:0000269" key="5">
    <source>
    </source>
</evidence>
<evidence type="ECO:0000305" key="6"/>
<gene>
    <name type="primary">EOL1</name>
    <name type="ordered locus">At4g02680</name>
    <name type="ORF">T10P11.24</name>
</gene>
<comment type="function">
    <text evidence="1 5">Possible regulator of the ethylene pathway, which acts by regulating the stability of 1-aminocyclopropane-1-carboxylate synthase (ACS) enzymes. May act as a substrate-specific adapter that connects ACS enzymes, such as ACS5, to ubiquitin ligase complexes, leading to proteasomal degradation of ACS enzymes (By similarity).</text>
</comment>
<comment type="pathway">
    <text>Protein modification; protein ubiquitination.</text>
</comment>
<comment type="subunit">
    <text evidence="3 5">Interacts with the C-terminal domain of ACS4, ACS5 and ACS9.</text>
</comment>
<comment type="tissue specificity">
    <text evidence="5">Predominantly expressed in flowers.</text>
</comment>
<comment type="domain">
    <text evidence="4">The BTB/POZ-like domain may mediate the interaction with some component of ubiquitin ligase complexes.</text>
</comment>
<comment type="similarity">
    <text evidence="6">Belongs to the ETO1 family.</text>
</comment>
<keyword id="KW-0175">Coiled coil</keyword>
<keyword id="KW-0936">Ethylene signaling pathway</keyword>
<keyword id="KW-1185">Reference proteome</keyword>
<keyword id="KW-0677">Repeat</keyword>
<keyword id="KW-0802">TPR repeat</keyword>
<keyword id="KW-0833">Ubl conjugation pathway</keyword>
<name>ETOL1_ARATH</name>